<comment type="function">
    <text evidence="1">Required for the insertion and/or proper folding and/or complex formation of integral membrane proteins into the membrane. Involved in integration of membrane proteins that insert both dependently and independently of the Sec translocase complex, as well as at least some lipoproteins. Aids folding of multispanning membrane proteins.</text>
</comment>
<comment type="subunit">
    <text evidence="1">Interacts with the Sec translocase complex via SecD. Specifically interacts with transmembrane segments of nascent integral membrane proteins during membrane integration.</text>
</comment>
<comment type="subcellular location">
    <subcellularLocation>
        <location evidence="1">Cell inner membrane</location>
        <topology evidence="1">Multi-pass membrane protein</topology>
    </subcellularLocation>
</comment>
<comment type="similarity">
    <text evidence="1">Belongs to the OXA1/ALB3/YidC family. Type 1 subfamily.</text>
</comment>
<dbReference type="EMBL" id="CP000744">
    <property type="protein sequence ID" value="ABR80730.1"/>
    <property type="molecule type" value="Genomic_DNA"/>
</dbReference>
<dbReference type="RefSeq" id="WP_003151622.1">
    <property type="nucleotide sequence ID" value="NC_009656.1"/>
</dbReference>
<dbReference type="SMR" id="A6VF45"/>
<dbReference type="GeneID" id="77224120"/>
<dbReference type="KEGG" id="pap:PSPA7_6369"/>
<dbReference type="HOGENOM" id="CLU_016535_3_0_6"/>
<dbReference type="Proteomes" id="UP000001582">
    <property type="component" value="Chromosome"/>
</dbReference>
<dbReference type="GO" id="GO:0005886">
    <property type="term" value="C:plasma membrane"/>
    <property type="evidence" value="ECO:0007669"/>
    <property type="project" value="UniProtKB-SubCell"/>
</dbReference>
<dbReference type="GO" id="GO:0032977">
    <property type="term" value="F:membrane insertase activity"/>
    <property type="evidence" value="ECO:0007669"/>
    <property type="project" value="InterPro"/>
</dbReference>
<dbReference type="GO" id="GO:0051205">
    <property type="term" value="P:protein insertion into membrane"/>
    <property type="evidence" value="ECO:0007669"/>
    <property type="project" value="TreeGrafter"/>
</dbReference>
<dbReference type="GO" id="GO:0015031">
    <property type="term" value="P:protein transport"/>
    <property type="evidence" value="ECO:0007669"/>
    <property type="project" value="UniProtKB-KW"/>
</dbReference>
<dbReference type="CDD" id="cd20070">
    <property type="entry name" value="5TM_YidC_Alb3"/>
    <property type="match status" value="1"/>
</dbReference>
<dbReference type="CDD" id="cd19961">
    <property type="entry name" value="EcYidC-like_peri"/>
    <property type="match status" value="1"/>
</dbReference>
<dbReference type="Gene3D" id="2.70.98.90">
    <property type="match status" value="1"/>
</dbReference>
<dbReference type="HAMAP" id="MF_01810">
    <property type="entry name" value="YidC_type1"/>
    <property type="match status" value="1"/>
</dbReference>
<dbReference type="InterPro" id="IPR019998">
    <property type="entry name" value="Membr_insert_YidC"/>
</dbReference>
<dbReference type="InterPro" id="IPR028053">
    <property type="entry name" value="Membr_insert_YidC_N"/>
</dbReference>
<dbReference type="InterPro" id="IPR001708">
    <property type="entry name" value="YidC/ALB3/OXA1/COX18"/>
</dbReference>
<dbReference type="InterPro" id="IPR028055">
    <property type="entry name" value="YidC/Oxa/ALB_C"/>
</dbReference>
<dbReference type="InterPro" id="IPR047196">
    <property type="entry name" value="YidC_ALB_C"/>
</dbReference>
<dbReference type="InterPro" id="IPR038221">
    <property type="entry name" value="YidC_periplasmic_sf"/>
</dbReference>
<dbReference type="NCBIfam" id="NF002352">
    <property type="entry name" value="PRK01318.1-3"/>
    <property type="match status" value="1"/>
</dbReference>
<dbReference type="NCBIfam" id="TIGR03593">
    <property type="entry name" value="yidC_nterm"/>
    <property type="match status" value="2"/>
</dbReference>
<dbReference type="NCBIfam" id="TIGR03592">
    <property type="entry name" value="yidC_oxa1_cterm"/>
    <property type="match status" value="1"/>
</dbReference>
<dbReference type="PANTHER" id="PTHR12428:SF65">
    <property type="entry name" value="CYTOCHROME C OXIDASE ASSEMBLY PROTEIN COX18, MITOCHONDRIAL"/>
    <property type="match status" value="1"/>
</dbReference>
<dbReference type="PANTHER" id="PTHR12428">
    <property type="entry name" value="OXA1"/>
    <property type="match status" value="1"/>
</dbReference>
<dbReference type="Pfam" id="PF02096">
    <property type="entry name" value="60KD_IMP"/>
    <property type="match status" value="1"/>
</dbReference>
<dbReference type="Pfam" id="PF14849">
    <property type="entry name" value="YidC_periplas"/>
    <property type="match status" value="2"/>
</dbReference>
<dbReference type="PRINTS" id="PR00701">
    <property type="entry name" value="60KDINNERMP"/>
</dbReference>
<dbReference type="PRINTS" id="PR01900">
    <property type="entry name" value="YIDCPROTEIN"/>
</dbReference>
<name>YIDC_PSEP7</name>
<feature type="chain" id="PRO_1000070137" description="Membrane protein insertase YidC">
    <location>
        <begin position="1"/>
        <end position="578"/>
    </location>
</feature>
<feature type="transmembrane region" description="Helical" evidence="1">
    <location>
        <begin position="3"/>
        <end position="23"/>
    </location>
</feature>
<feature type="transmembrane region" description="Helical" evidence="1">
    <location>
        <begin position="361"/>
        <end position="381"/>
    </location>
</feature>
<feature type="transmembrane region" description="Helical" evidence="1">
    <location>
        <begin position="387"/>
        <end position="407"/>
    </location>
</feature>
<feature type="transmembrane region" description="Helical" evidence="1">
    <location>
        <begin position="457"/>
        <end position="477"/>
    </location>
</feature>
<feature type="transmembrane region" description="Helical" evidence="1">
    <location>
        <begin position="500"/>
        <end position="520"/>
    </location>
</feature>
<feature type="transmembrane region" description="Helical" evidence="1">
    <location>
        <begin position="535"/>
        <end position="555"/>
    </location>
</feature>
<feature type="region of interest" description="Disordered" evidence="2">
    <location>
        <begin position="34"/>
        <end position="71"/>
    </location>
</feature>
<feature type="compositionally biased region" description="Polar residues" evidence="2">
    <location>
        <begin position="37"/>
        <end position="65"/>
    </location>
</feature>
<proteinExistence type="inferred from homology"/>
<keyword id="KW-0997">Cell inner membrane</keyword>
<keyword id="KW-1003">Cell membrane</keyword>
<keyword id="KW-0143">Chaperone</keyword>
<keyword id="KW-0472">Membrane</keyword>
<keyword id="KW-0653">Protein transport</keyword>
<keyword id="KW-0812">Transmembrane</keyword>
<keyword id="KW-1133">Transmembrane helix</keyword>
<keyword id="KW-0813">Transport</keyword>
<protein>
    <recommendedName>
        <fullName evidence="1">Membrane protein insertase YidC</fullName>
    </recommendedName>
    <alternativeName>
        <fullName evidence="1">Foldase YidC</fullName>
    </alternativeName>
    <alternativeName>
        <fullName evidence="1">Membrane integrase YidC</fullName>
    </alternativeName>
    <alternativeName>
        <fullName evidence="1">Membrane protein YidC</fullName>
    </alternativeName>
</protein>
<gene>
    <name evidence="1" type="primary">yidC</name>
    <name type="ordered locus">PSPA7_6369</name>
</gene>
<sequence>MDIQRSILIVALAVVSYLLVLQWNKDYGQPELPAASASMNTTQGLPDTPSAAGTSSDVPTAQSGAAGSEAADKPVAVSDKLIQVKTDVLDLAIDPRGGDIVQLGLLQYPRRLDRPDVPFPLFDNGRERTYLAQSGLTGADGPDASSAGRPLFHSAQGSYQLADGQNELVVDLSFSRDGVNYIKRFTFHRGLKADCSDKEKAQKKIECINENAYQVGVSYLIDNQSGKTWSGNLFAQLKRDGSADPSSTTATGVSTYLGAAVWTPDSPYKKISTKDMDKEQFKESVQGGWVAWLQHYFVTAWVPTKGEQHQVMTRKDGQGNYIVGFTGPTLSVPAGGKVETDLTLYAGPKLQKHLKELSPGLELTVDYGFLWFIAQPIFWLLQHIHSLIGNWGWSIIALTVLIKLAFFPLSAASYRSMARMRAVSPKMQAIKEQHGDDRQKMSQAMMELYKKEKINPLGGCLPILVQMPVFLSLYWVLLESVEMRQAPWLGWITDLSVKDPFFILPIVMGGTMLIQQMLNPTPPDPMQAKVMKLMPIIFTFFFLWFPAGLVLYWVVNNVLSIAQQWYITRKIEAAAKTA</sequence>
<reference key="1">
    <citation type="submission" date="2007-06" db="EMBL/GenBank/DDBJ databases">
        <authorList>
            <person name="Dodson R.J."/>
            <person name="Harkins D."/>
            <person name="Paulsen I.T."/>
        </authorList>
    </citation>
    <scope>NUCLEOTIDE SEQUENCE [LARGE SCALE GENOMIC DNA]</scope>
    <source>
        <strain>DSM 24068 / PA7</strain>
    </source>
</reference>
<organism>
    <name type="scientific">Pseudomonas paraeruginosa (strain DSM 24068 / PA7)</name>
    <name type="common">Pseudomonas aeruginosa (strain PA7)</name>
    <dbReference type="NCBI Taxonomy" id="381754"/>
    <lineage>
        <taxon>Bacteria</taxon>
        <taxon>Pseudomonadati</taxon>
        <taxon>Pseudomonadota</taxon>
        <taxon>Gammaproteobacteria</taxon>
        <taxon>Pseudomonadales</taxon>
        <taxon>Pseudomonadaceae</taxon>
        <taxon>Pseudomonas</taxon>
        <taxon>Pseudomonas paraeruginosa</taxon>
    </lineage>
</organism>
<accession>A6VF45</accession>
<evidence type="ECO:0000255" key="1">
    <source>
        <dbReference type="HAMAP-Rule" id="MF_01810"/>
    </source>
</evidence>
<evidence type="ECO:0000256" key="2">
    <source>
        <dbReference type="SAM" id="MobiDB-lite"/>
    </source>
</evidence>